<sequence length="388" mass="43565">MNKILVINAGSSSIKFQLYDANEKVLAKGLCERIFIDGAFKYEFEDGSKDEGNSAFPTHKEALTHLLESLKKHKVINDLSEIVGVGHRVVQGAYWTDSTLITPQVLEKIYELAKLAPLHNKPEADVIDVVQKLIPKAKNVAVFDTSFHTSMPEVAYEYAIPREWKEKHLVRRYGYHGTSYRYVTKRFEQLLNKKAVNLVICHLGNGASIAAIKDSKSINTSMGFTPLEGLVMGTRSGDIDPSVVQYIAKQTNKTLDQVIDDLNKKSGLLGLSSYADMRDVTSNLPKTQLTLDVYTQRVADYILKYANQINASIDGLVFTAGVGENASLIIQEVVNKVHLLKVSLDPKAFEQKYSDYRKLSDDKSQLNVYQVRTNEEIMIMRDVVRLSK</sequence>
<reference key="1">
    <citation type="journal article" date="2003" name="Microbiology">
        <title>The complete genome sequence of the avian pathogen Mycoplasma gallisepticum strain R(low).</title>
        <authorList>
            <person name="Papazisi L."/>
            <person name="Gorton T.S."/>
            <person name="Kutish G."/>
            <person name="Markham P.F."/>
            <person name="Browning G.F."/>
            <person name="Nguyen D.K."/>
            <person name="Swartzell S."/>
            <person name="Madan A."/>
            <person name="Mahairas G."/>
            <person name="Geary S.J."/>
        </authorList>
    </citation>
    <scope>NUCLEOTIDE SEQUENCE [LARGE SCALE GENOMIC DNA]</scope>
    <source>
        <strain>R(low / passage 15 / clone 2)</strain>
    </source>
</reference>
<dbReference type="EC" id="2.7.2.1" evidence="1"/>
<dbReference type="EMBL" id="AE015450">
    <property type="protein sequence ID" value="AAP56837.2"/>
    <property type="molecule type" value="Genomic_DNA"/>
</dbReference>
<dbReference type="RefSeq" id="WP_011113736.1">
    <property type="nucleotide sequence ID" value="NC_004829.2"/>
</dbReference>
<dbReference type="SMR" id="Q7NAZ6"/>
<dbReference type="KEGG" id="mga:MGA_0169"/>
<dbReference type="PATRIC" id="fig|233150.7.peg.545"/>
<dbReference type="HOGENOM" id="CLU_020352_0_0_14"/>
<dbReference type="OrthoDB" id="9802453at2"/>
<dbReference type="UniPathway" id="UPA00340">
    <property type="reaction ID" value="UER00458"/>
</dbReference>
<dbReference type="Proteomes" id="UP000001418">
    <property type="component" value="Chromosome"/>
</dbReference>
<dbReference type="GO" id="GO:0005737">
    <property type="term" value="C:cytoplasm"/>
    <property type="evidence" value="ECO:0007669"/>
    <property type="project" value="UniProtKB-SubCell"/>
</dbReference>
<dbReference type="GO" id="GO:0008776">
    <property type="term" value="F:acetate kinase activity"/>
    <property type="evidence" value="ECO:0007669"/>
    <property type="project" value="UniProtKB-UniRule"/>
</dbReference>
<dbReference type="GO" id="GO:0005524">
    <property type="term" value="F:ATP binding"/>
    <property type="evidence" value="ECO:0007669"/>
    <property type="project" value="UniProtKB-KW"/>
</dbReference>
<dbReference type="GO" id="GO:0000287">
    <property type="term" value="F:magnesium ion binding"/>
    <property type="evidence" value="ECO:0007669"/>
    <property type="project" value="UniProtKB-UniRule"/>
</dbReference>
<dbReference type="GO" id="GO:0006083">
    <property type="term" value="P:acetate metabolic process"/>
    <property type="evidence" value="ECO:0007669"/>
    <property type="project" value="TreeGrafter"/>
</dbReference>
<dbReference type="GO" id="GO:0006085">
    <property type="term" value="P:acetyl-CoA biosynthetic process"/>
    <property type="evidence" value="ECO:0007669"/>
    <property type="project" value="UniProtKB-UniRule"/>
</dbReference>
<dbReference type="CDD" id="cd24010">
    <property type="entry name" value="ASKHA_NBD_AcK_PK"/>
    <property type="match status" value="1"/>
</dbReference>
<dbReference type="Gene3D" id="3.30.420.40">
    <property type="match status" value="2"/>
</dbReference>
<dbReference type="HAMAP" id="MF_00020">
    <property type="entry name" value="Acetate_kinase"/>
    <property type="match status" value="1"/>
</dbReference>
<dbReference type="InterPro" id="IPR004372">
    <property type="entry name" value="Ac/propionate_kinase"/>
</dbReference>
<dbReference type="InterPro" id="IPR000890">
    <property type="entry name" value="Aliphatic_acid_kin_short-chain"/>
</dbReference>
<dbReference type="InterPro" id="IPR023865">
    <property type="entry name" value="Aliphatic_acid_kinase_CS"/>
</dbReference>
<dbReference type="InterPro" id="IPR043129">
    <property type="entry name" value="ATPase_NBD"/>
</dbReference>
<dbReference type="NCBIfam" id="TIGR00016">
    <property type="entry name" value="ackA"/>
    <property type="match status" value="1"/>
</dbReference>
<dbReference type="PANTHER" id="PTHR21060">
    <property type="entry name" value="ACETATE KINASE"/>
    <property type="match status" value="1"/>
</dbReference>
<dbReference type="PANTHER" id="PTHR21060:SF15">
    <property type="entry name" value="ACETATE KINASE-RELATED"/>
    <property type="match status" value="1"/>
</dbReference>
<dbReference type="Pfam" id="PF00871">
    <property type="entry name" value="Acetate_kinase"/>
    <property type="match status" value="1"/>
</dbReference>
<dbReference type="PIRSF" id="PIRSF000722">
    <property type="entry name" value="Acetate_prop_kin"/>
    <property type="match status" value="1"/>
</dbReference>
<dbReference type="PRINTS" id="PR00471">
    <property type="entry name" value="ACETATEKNASE"/>
</dbReference>
<dbReference type="SUPFAM" id="SSF53067">
    <property type="entry name" value="Actin-like ATPase domain"/>
    <property type="match status" value="2"/>
</dbReference>
<dbReference type="PROSITE" id="PS01075">
    <property type="entry name" value="ACETATE_KINASE_1"/>
    <property type="match status" value="1"/>
</dbReference>
<evidence type="ECO:0000255" key="1">
    <source>
        <dbReference type="HAMAP-Rule" id="MF_00020"/>
    </source>
</evidence>
<comment type="function">
    <text evidence="1">Catalyzes the formation of acetyl phosphate from acetate and ATP. Can also catalyze the reverse reaction.</text>
</comment>
<comment type="catalytic activity">
    <reaction evidence="1">
        <text>acetate + ATP = acetyl phosphate + ADP</text>
        <dbReference type="Rhea" id="RHEA:11352"/>
        <dbReference type="ChEBI" id="CHEBI:22191"/>
        <dbReference type="ChEBI" id="CHEBI:30089"/>
        <dbReference type="ChEBI" id="CHEBI:30616"/>
        <dbReference type="ChEBI" id="CHEBI:456216"/>
        <dbReference type="EC" id="2.7.2.1"/>
    </reaction>
</comment>
<comment type="cofactor">
    <cofactor evidence="1">
        <name>Mg(2+)</name>
        <dbReference type="ChEBI" id="CHEBI:18420"/>
    </cofactor>
    <cofactor evidence="1">
        <name>Mn(2+)</name>
        <dbReference type="ChEBI" id="CHEBI:29035"/>
    </cofactor>
    <text evidence="1">Mg(2+). Can also accept Mn(2+).</text>
</comment>
<comment type="pathway">
    <text evidence="1">Metabolic intermediate biosynthesis; acetyl-CoA biosynthesis; acetyl-CoA from acetate: step 1/2.</text>
</comment>
<comment type="subunit">
    <text evidence="1">Homodimer.</text>
</comment>
<comment type="subcellular location">
    <subcellularLocation>
        <location evidence="1">Cytoplasm</location>
    </subcellularLocation>
</comment>
<comment type="similarity">
    <text evidence="1">Belongs to the acetokinase family.</text>
</comment>
<gene>
    <name evidence="1" type="primary">ackA</name>
    <name type="ordered locus">MYCGA4870</name>
    <name type="ORF">MGA_0169</name>
</gene>
<accession>Q7NAZ6</accession>
<protein>
    <recommendedName>
        <fullName evidence="1">Acetate kinase</fullName>
        <ecNumber evidence="1">2.7.2.1</ecNumber>
    </recommendedName>
    <alternativeName>
        <fullName evidence="1">Acetokinase</fullName>
    </alternativeName>
</protein>
<feature type="chain" id="PRO_0000107585" description="Acetate kinase">
    <location>
        <begin position="1"/>
        <end position="388"/>
    </location>
</feature>
<feature type="active site" description="Proton donor/acceptor" evidence="1">
    <location>
        <position position="144"/>
    </location>
</feature>
<feature type="binding site" evidence="1">
    <location>
        <position position="8"/>
    </location>
    <ligand>
        <name>Mg(2+)</name>
        <dbReference type="ChEBI" id="CHEBI:18420"/>
    </ligand>
</feature>
<feature type="binding site" evidence="1">
    <location>
        <position position="15"/>
    </location>
    <ligand>
        <name>ATP</name>
        <dbReference type="ChEBI" id="CHEBI:30616"/>
    </ligand>
</feature>
<feature type="binding site" evidence="1">
    <location>
        <position position="88"/>
    </location>
    <ligand>
        <name>substrate</name>
    </ligand>
</feature>
<feature type="binding site" evidence="1">
    <location>
        <begin position="202"/>
        <end position="206"/>
    </location>
    <ligand>
        <name>ATP</name>
        <dbReference type="ChEBI" id="CHEBI:30616"/>
    </ligand>
</feature>
<feature type="binding site" evidence="1">
    <location>
        <begin position="276"/>
        <end position="278"/>
    </location>
    <ligand>
        <name>ATP</name>
        <dbReference type="ChEBI" id="CHEBI:30616"/>
    </ligand>
</feature>
<feature type="binding site" evidence="1">
    <location>
        <begin position="321"/>
        <end position="325"/>
    </location>
    <ligand>
        <name>ATP</name>
        <dbReference type="ChEBI" id="CHEBI:30616"/>
    </ligand>
</feature>
<feature type="binding site" evidence="1">
    <location>
        <position position="375"/>
    </location>
    <ligand>
        <name>Mg(2+)</name>
        <dbReference type="ChEBI" id="CHEBI:18420"/>
    </ligand>
</feature>
<feature type="site" description="Transition state stabilizer" evidence="1">
    <location>
        <position position="176"/>
    </location>
</feature>
<feature type="site" description="Transition state stabilizer" evidence="1">
    <location>
        <position position="235"/>
    </location>
</feature>
<name>ACKA_MYCGA</name>
<proteinExistence type="inferred from homology"/>
<organism>
    <name type="scientific">Mycoplasmoides gallisepticum (strain R(low / passage 15 / clone 2))</name>
    <name type="common">Mycoplasma gallisepticum</name>
    <dbReference type="NCBI Taxonomy" id="710127"/>
    <lineage>
        <taxon>Bacteria</taxon>
        <taxon>Bacillati</taxon>
        <taxon>Mycoplasmatota</taxon>
        <taxon>Mycoplasmoidales</taxon>
        <taxon>Mycoplasmoidaceae</taxon>
        <taxon>Mycoplasmoides</taxon>
    </lineage>
</organism>
<keyword id="KW-0067">ATP-binding</keyword>
<keyword id="KW-0963">Cytoplasm</keyword>
<keyword id="KW-0418">Kinase</keyword>
<keyword id="KW-0460">Magnesium</keyword>
<keyword id="KW-0479">Metal-binding</keyword>
<keyword id="KW-0547">Nucleotide-binding</keyword>
<keyword id="KW-1185">Reference proteome</keyword>
<keyword id="KW-0808">Transferase</keyword>